<gene>
    <name evidence="1" type="primary">nfuA</name>
    <name type="ordered locus">Pmen_2161</name>
</gene>
<dbReference type="EMBL" id="CP000680">
    <property type="protein sequence ID" value="ABP84921.1"/>
    <property type="molecule type" value="Genomic_DNA"/>
</dbReference>
<dbReference type="SMR" id="A4XUA5"/>
<dbReference type="STRING" id="399739.Pmen_2161"/>
<dbReference type="KEGG" id="pmy:Pmen_2161"/>
<dbReference type="PATRIC" id="fig|399739.8.peg.2186"/>
<dbReference type="eggNOG" id="COG0316">
    <property type="taxonomic scope" value="Bacteria"/>
</dbReference>
<dbReference type="eggNOG" id="COG0694">
    <property type="taxonomic scope" value="Bacteria"/>
</dbReference>
<dbReference type="HOGENOM" id="CLU_094569_0_0_6"/>
<dbReference type="OrthoDB" id="9785450at2"/>
<dbReference type="GO" id="GO:0051539">
    <property type="term" value="F:4 iron, 4 sulfur cluster binding"/>
    <property type="evidence" value="ECO:0007669"/>
    <property type="project" value="UniProtKB-UniRule"/>
</dbReference>
<dbReference type="GO" id="GO:0005506">
    <property type="term" value="F:iron ion binding"/>
    <property type="evidence" value="ECO:0007669"/>
    <property type="project" value="InterPro"/>
</dbReference>
<dbReference type="GO" id="GO:0016226">
    <property type="term" value="P:iron-sulfur cluster assembly"/>
    <property type="evidence" value="ECO:0007669"/>
    <property type="project" value="UniProtKB-UniRule"/>
</dbReference>
<dbReference type="GO" id="GO:0051604">
    <property type="term" value="P:protein maturation"/>
    <property type="evidence" value="ECO:0007669"/>
    <property type="project" value="UniProtKB-UniRule"/>
</dbReference>
<dbReference type="Gene3D" id="3.30.300.130">
    <property type="entry name" value="Fe-S cluster assembly (FSCA)"/>
    <property type="match status" value="1"/>
</dbReference>
<dbReference type="Gene3D" id="2.60.300.12">
    <property type="entry name" value="HesB-like domain"/>
    <property type="match status" value="1"/>
</dbReference>
<dbReference type="HAMAP" id="MF_01637">
    <property type="entry name" value="Fe_S_biogen_NfuA"/>
    <property type="match status" value="1"/>
</dbReference>
<dbReference type="InterPro" id="IPR017726">
    <property type="entry name" value="Fe/S_biogenesis_protein_NfuA"/>
</dbReference>
<dbReference type="InterPro" id="IPR000361">
    <property type="entry name" value="FeS_biogenesis"/>
</dbReference>
<dbReference type="InterPro" id="IPR034904">
    <property type="entry name" value="FSCA_dom_sf"/>
</dbReference>
<dbReference type="InterPro" id="IPR035903">
    <property type="entry name" value="HesB-like_dom_sf"/>
</dbReference>
<dbReference type="InterPro" id="IPR001075">
    <property type="entry name" value="NIF_FeS_clus_asmbl_NifU_C"/>
</dbReference>
<dbReference type="NCBIfam" id="TIGR03341">
    <property type="entry name" value="YhgI_GntY"/>
    <property type="match status" value="1"/>
</dbReference>
<dbReference type="PANTHER" id="PTHR11178:SF51">
    <property type="entry name" value="FE_S BIOGENESIS PROTEIN NFUA"/>
    <property type="match status" value="1"/>
</dbReference>
<dbReference type="PANTHER" id="PTHR11178">
    <property type="entry name" value="IRON-SULFUR CLUSTER SCAFFOLD PROTEIN NFU-RELATED"/>
    <property type="match status" value="1"/>
</dbReference>
<dbReference type="Pfam" id="PF01521">
    <property type="entry name" value="Fe-S_biosyn"/>
    <property type="match status" value="1"/>
</dbReference>
<dbReference type="Pfam" id="PF01106">
    <property type="entry name" value="NifU"/>
    <property type="match status" value="1"/>
</dbReference>
<dbReference type="SUPFAM" id="SSF117916">
    <property type="entry name" value="Fe-S cluster assembly (FSCA) domain-like"/>
    <property type="match status" value="1"/>
</dbReference>
<dbReference type="SUPFAM" id="SSF89360">
    <property type="entry name" value="HesB-like domain"/>
    <property type="match status" value="1"/>
</dbReference>
<evidence type="ECO:0000255" key="1">
    <source>
        <dbReference type="HAMAP-Rule" id="MF_01637"/>
    </source>
</evidence>
<reference key="1">
    <citation type="submission" date="2007-04" db="EMBL/GenBank/DDBJ databases">
        <title>Complete sequence of Pseudomonas mendocina ymp.</title>
        <authorList>
            <consortium name="US DOE Joint Genome Institute"/>
            <person name="Copeland A."/>
            <person name="Lucas S."/>
            <person name="Lapidus A."/>
            <person name="Barry K."/>
            <person name="Glavina del Rio T."/>
            <person name="Dalin E."/>
            <person name="Tice H."/>
            <person name="Pitluck S."/>
            <person name="Kiss H."/>
            <person name="Brettin T."/>
            <person name="Detter J.C."/>
            <person name="Bruce D."/>
            <person name="Han C."/>
            <person name="Schmutz J."/>
            <person name="Larimer F."/>
            <person name="Land M."/>
            <person name="Hauser L."/>
            <person name="Kyrpides N."/>
            <person name="Mikhailova N."/>
            <person name="Hersman L."/>
            <person name="Dubois J."/>
            <person name="Maurice P."/>
            <person name="Richardson P."/>
        </authorList>
    </citation>
    <scope>NUCLEOTIDE SEQUENCE [LARGE SCALE GENOMIC DNA]</scope>
    <source>
        <strain>ymp</strain>
    </source>
</reference>
<feature type="chain" id="PRO_1000186763" description="Fe/S biogenesis protein NfuA">
    <location>
        <begin position="1"/>
        <end position="194"/>
    </location>
</feature>
<feature type="binding site" evidence="1">
    <location>
        <position position="152"/>
    </location>
    <ligand>
        <name>[4Fe-4S] cluster</name>
        <dbReference type="ChEBI" id="CHEBI:49883"/>
    </ligand>
</feature>
<feature type="binding site" evidence="1">
    <location>
        <position position="155"/>
    </location>
    <ligand>
        <name>[4Fe-4S] cluster</name>
        <dbReference type="ChEBI" id="CHEBI:49883"/>
    </ligand>
</feature>
<comment type="function">
    <text evidence="1">Involved in iron-sulfur cluster biogenesis. Binds a 4Fe-4S cluster, can transfer this cluster to apoproteins, and thereby intervenes in the maturation of Fe/S proteins. Could also act as a scaffold/chaperone for damaged Fe/S proteins.</text>
</comment>
<comment type="cofactor">
    <cofactor evidence="1">
        <name>[4Fe-4S] cluster</name>
        <dbReference type="ChEBI" id="CHEBI:49883"/>
    </cofactor>
    <text evidence="1">Binds 1 [4Fe-4S] cluster per subunit. The cluster is presumably bound at the interface of two monomers.</text>
</comment>
<comment type="subunit">
    <text evidence="1">Homodimer.</text>
</comment>
<comment type="similarity">
    <text evidence="1">Belongs to the NfuA family.</text>
</comment>
<keyword id="KW-0004">4Fe-4S</keyword>
<keyword id="KW-0408">Iron</keyword>
<keyword id="KW-0411">Iron-sulfur</keyword>
<keyword id="KW-0479">Metal-binding</keyword>
<protein>
    <recommendedName>
        <fullName evidence="1">Fe/S biogenesis protein NfuA</fullName>
    </recommendedName>
</protein>
<sequence>MSAITITQAAEDYLAELLSKQDTPGIGIRVFITQPGTPYAETCIAYCKPGEQKPEDTPVGLASFTAWIDAVSEPFLEDAVVDYATDRMGGQLTIKAPNAKVPMVNEDSPLNERINYYLQTEINPGLASHGGQVSLVDVVEEGIAVLRFGGGCQGCGQADYTLKEGIEKTLLERIPELKGVRDVTDHSNRENAYY</sequence>
<organism>
    <name type="scientific">Ectopseudomonas mendocina (strain ymp)</name>
    <name type="common">Pseudomonas mendocina</name>
    <dbReference type="NCBI Taxonomy" id="399739"/>
    <lineage>
        <taxon>Bacteria</taxon>
        <taxon>Pseudomonadati</taxon>
        <taxon>Pseudomonadota</taxon>
        <taxon>Gammaproteobacteria</taxon>
        <taxon>Pseudomonadales</taxon>
        <taxon>Pseudomonadaceae</taxon>
        <taxon>Ectopseudomonas</taxon>
    </lineage>
</organism>
<accession>A4XUA5</accession>
<proteinExistence type="inferred from homology"/>
<name>NFUA_ECTM1</name>